<gene>
    <name evidence="1" type="primary">pyrI</name>
    <name type="ordered locus">SbBS512_E4839</name>
</gene>
<protein>
    <recommendedName>
        <fullName evidence="1">Aspartate carbamoyltransferase regulatory chain</fullName>
    </recommendedName>
</protein>
<keyword id="KW-0479">Metal-binding</keyword>
<keyword id="KW-0665">Pyrimidine biosynthesis</keyword>
<keyword id="KW-1185">Reference proteome</keyword>
<keyword id="KW-0862">Zinc</keyword>
<reference key="1">
    <citation type="submission" date="2008-05" db="EMBL/GenBank/DDBJ databases">
        <title>Complete sequence of Shigella boydii serotype 18 strain BS512.</title>
        <authorList>
            <person name="Rasko D.A."/>
            <person name="Rosovitz M."/>
            <person name="Maurelli A.T."/>
            <person name="Myers G."/>
            <person name="Seshadri R."/>
            <person name="Cer R."/>
            <person name="Jiang L."/>
            <person name="Ravel J."/>
            <person name="Sebastian Y."/>
        </authorList>
    </citation>
    <scope>NUCLEOTIDE SEQUENCE [LARGE SCALE GENOMIC DNA]</scope>
    <source>
        <strain>CDC 3083-94 / BS512</strain>
    </source>
</reference>
<sequence length="153" mass="17121">MTHDNKLQVEAIKRGTVIDHIPAQIGFKLLSLFKLTETDQRITIGLNLPSGEMGRKDLIKIENTFLSEDQVDQLALYAPQATVNRIDNYEVVGKSRPSLPERIDNVLVCPNSNCISHAEPVSSSFAVRKRANDIALKCKYCEKEFSHNVVLAN</sequence>
<dbReference type="EMBL" id="CP001063">
    <property type="protein sequence ID" value="ACD09008.1"/>
    <property type="molecule type" value="Genomic_DNA"/>
</dbReference>
<dbReference type="RefSeq" id="WP_000148581.1">
    <property type="nucleotide sequence ID" value="NC_010658.1"/>
</dbReference>
<dbReference type="SMR" id="B2TYZ9"/>
<dbReference type="STRING" id="344609.SbBS512_E4839"/>
<dbReference type="GeneID" id="93777580"/>
<dbReference type="KEGG" id="sbc:SbBS512_E4839"/>
<dbReference type="HOGENOM" id="CLU_128576_0_0_6"/>
<dbReference type="Proteomes" id="UP000001030">
    <property type="component" value="Chromosome"/>
</dbReference>
<dbReference type="GO" id="GO:0009347">
    <property type="term" value="C:aspartate carbamoyltransferase complex"/>
    <property type="evidence" value="ECO:0007669"/>
    <property type="project" value="InterPro"/>
</dbReference>
<dbReference type="GO" id="GO:0046872">
    <property type="term" value="F:metal ion binding"/>
    <property type="evidence" value="ECO:0007669"/>
    <property type="project" value="UniProtKB-KW"/>
</dbReference>
<dbReference type="GO" id="GO:0006207">
    <property type="term" value="P:'de novo' pyrimidine nucleobase biosynthetic process"/>
    <property type="evidence" value="ECO:0007669"/>
    <property type="project" value="InterPro"/>
</dbReference>
<dbReference type="GO" id="GO:0006221">
    <property type="term" value="P:pyrimidine nucleotide biosynthetic process"/>
    <property type="evidence" value="ECO:0007669"/>
    <property type="project" value="UniProtKB-UniRule"/>
</dbReference>
<dbReference type="FunFam" id="2.30.30.20:FF:000001">
    <property type="entry name" value="Aspartate carbamoyltransferase regulatory chain"/>
    <property type="match status" value="1"/>
</dbReference>
<dbReference type="FunFam" id="3.30.70.140:FF:000001">
    <property type="entry name" value="Aspartate carbamoyltransferase regulatory chain"/>
    <property type="match status" value="1"/>
</dbReference>
<dbReference type="Gene3D" id="2.30.30.20">
    <property type="entry name" value="Aspartate carbamoyltransferase regulatory subunit, C-terminal domain"/>
    <property type="match status" value="1"/>
</dbReference>
<dbReference type="Gene3D" id="3.30.70.140">
    <property type="entry name" value="Aspartate carbamoyltransferase regulatory subunit, N-terminal domain"/>
    <property type="match status" value="1"/>
</dbReference>
<dbReference type="HAMAP" id="MF_00002">
    <property type="entry name" value="Asp_carb_tr_reg"/>
    <property type="match status" value="1"/>
</dbReference>
<dbReference type="InterPro" id="IPR020545">
    <property type="entry name" value="Asp_carbamoyltransf_reg_N"/>
</dbReference>
<dbReference type="InterPro" id="IPR002801">
    <property type="entry name" value="Asp_carbamoylTrfase_reg"/>
</dbReference>
<dbReference type="InterPro" id="IPR020542">
    <property type="entry name" value="Asp_carbamoyltrfase_reg_C"/>
</dbReference>
<dbReference type="InterPro" id="IPR036792">
    <property type="entry name" value="Asp_carbatrfase_reg_C_sf"/>
</dbReference>
<dbReference type="InterPro" id="IPR036793">
    <property type="entry name" value="Asp_carbatrfase_reg_N_sf"/>
</dbReference>
<dbReference type="NCBIfam" id="TIGR00240">
    <property type="entry name" value="ATCase_reg"/>
    <property type="match status" value="1"/>
</dbReference>
<dbReference type="PANTHER" id="PTHR35805">
    <property type="entry name" value="ASPARTATE CARBAMOYLTRANSFERASE REGULATORY CHAIN"/>
    <property type="match status" value="1"/>
</dbReference>
<dbReference type="PANTHER" id="PTHR35805:SF1">
    <property type="entry name" value="ASPARTATE CARBAMOYLTRANSFERASE REGULATORY CHAIN"/>
    <property type="match status" value="1"/>
</dbReference>
<dbReference type="Pfam" id="PF01948">
    <property type="entry name" value="PyrI"/>
    <property type="match status" value="1"/>
</dbReference>
<dbReference type="Pfam" id="PF02748">
    <property type="entry name" value="PyrI_C"/>
    <property type="match status" value="1"/>
</dbReference>
<dbReference type="SUPFAM" id="SSF57825">
    <property type="entry name" value="Aspartate carbamoyltransferase, Regulatory-chain, C-terminal domain"/>
    <property type="match status" value="1"/>
</dbReference>
<dbReference type="SUPFAM" id="SSF54893">
    <property type="entry name" value="Aspartate carbamoyltransferase, Regulatory-chain, N-terminal domain"/>
    <property type="match status" value="1"/>
</dbReference>
<evidence type="ECO:0000255" key="1">
    <source>
        <dbReference type="HAMAP-Rule" id="MF_00002"/>
    </source>
</evidence>
<comment type="function">
    <text evidence="1">Involved in allosteric regulation of aspartate carbamoyltransferase.</text>
</comment>
<comment type="cofactor">
    <cofactor evidence="1">
        <name>Zn(2+)</name>
        <dbReference type="ChEBI" id="CHEBI:29105"/>
    </cofactor>
    <text evidence="1">Binds 1 zinc ion per subunit.</text>
</comment>
<comment type="subunit">
    <text evidence="1">Contains catalytic and regulatory chains.</text>
</comment>
<comment type="similarity">
    <text evidence="1">Belongs to the PyrI family.</text>
</comment>
<feature type="chain" id="PRO_1000088841" description="Aspartate carbamoyltransferase regulatory chain">
    <location>
        <begin position="1"/>
        <end position="153"/>
    </location>
</feature>
<feature type="binding site" evidence="1">
    <location>
        <position position="109"/>
    </location>
    <ligand>
        <name>Zn(2+)</name>
        <dbReference type="ChEBI" id="CHEBI:29105"/>
    </ligand>
</feature>
<feature type="binding site" evidence="1">
    <location>
        <position position="114"/>
    </location>
    <ligand>
        <name>Zn(2+)</name>
        <dbReference type="ChEBI" id="CHEBI:29105"/>
    </ligand>
</feature>
<feature type="binding site" evidence="1">
    <location>
        <position position="138"/>
    </location>
    <ligand>
        <name>Zn(2+)</name>
        <dbReference type="ChEBI" id="CHEBI:29105"/>
    </ligand>
</feature>
<feature type="binding site" evidence="1">
    <location>
        <position position="141"/>
    </location>
    <ligand>
        <name>Zn(2+)</name>
        <dbReference type="ChEBI" id="CHEBI:29105"/>
    </ligand>
</feature>
<proteinExistence type="inferred from homology"/>
<accession>B2TYZ9</accession>
<name>PYRI_SHIB3</name>
<organism>
    <name type="scientific">Shigella boydii serotype 18 (strain CDC 3083-94 / BS512)</name>
    <dbReference type="NCBI Taxonomy" id="344609"/>
    <lineage>
        <taxon>Bacteria</taxon>
        <taxon>Pseudomonadati</taxon>
        <taxon>Pseudomonadota</taxon>
        <taxon>Gammaproteobacteria</taxon>
        <taxon>Enterobacterales</taxon>
        <taxon>Enterobacteriaceae</taxon>
        <taxon>Shigella</taxon>
    </lineage>
</organism>